<sequence length="199" mass="22893">MSNLENLTSKIIEDANKEAEKLLSEAKKEENEIVDEKVKKANKAKEQIIEKTKREAKTKAERVISNTHLKVRNNKLEAKQEMINKVFDEAVIKLQNLPQEEYLNFIKNSILSLDIEGDEEIIVSSNDKDKIDISFMLTLNNKLKDKGKKELLKISNENRDIKGGFILYKNGIEINNSFEALVDSLRDELEQEIIEALFS</sequence>
<organism>
    <name type="scientific">Clostridium botulinum (strain Loch Maree / Type A3)</name>
    <dbReference type="NCBI Taxonomy" id="498214"/>
    <lineage>
        <taxon>Bacteria</taxon>
        <taxon>Bacillati</taxon>
        <taxon>Bacillota</taxon>
        <taxon>Clostridia</taxon>
        <taxon>Eubacteriales</taxon>
        <taxon>Clostridiaceae</taxon>
        <taxon>Clostridium</taxon>
    </lineage>
</organism>
<protein>
    <recommendedName>
        <fullName evidence="1">V-type proton ATPase subunit E</fullName>
    </recommendedName>
    <alternativeName>
        <fullName evidence="1">V-ATPase subunit E</fullName>
    </alternativeName>
</protein>
<gene>
    <name evidence="1" type="primary">atpE</name>
    <name type="ordered locus">CLK_2014</name>
</gene>
<evidence type="ECO:0000255" key="1">
    <source>
        <dbReference type="HAMAP-Rule" id="MF_00311"/>
    </source>
</evidence>
<dbReference type="EMBL" id="CP000962">
    <property type="protein sequence ID" value="ACA53846.1"/>
    <property type="molecule type" value="Genomic_DNA"/>
</dbReference>
<dbReference type="RefSeq" id="WP_012342027.1">
    <property type="nucleotide sequence ID" value="NC_010520.1"/>
</dbReference>
<dbReference type="SMR" id="B1KXT9"/>
<dbReference type="KEGG" id="cbl:CLK_2014"/>
<dbReference type="HOGENOM" id="CLU_105846_0_0_9"/>
<dbReference type="GO" id="GO:0033178">
    <property type="term" value="C:proton-transporting two-sector ATPase complex, catalytic domain"/>
    <property type="evidence" value="ECO:0007669"/>
    <property type="project" value="InterPro"/>
</dbReference>
<dbReference type="GO" id="GO:0005524">
    <property type="term" value="F:ATP binding"/>
    <property type="evidence" value="ECO:0007669"/>
    <property type="project" value="UniProtKB-UniRule"/>
</dbReference>
<dbReference type="GO" id="GO:0046933">
    <property type="term" value="F:proton-transporting ATP synthase activity, rotational mechanism"/>
    <property type="evidence" value="ECO:0007669"/>
    <property type="project" value="UniProtKB-UniRule"/>
</dbReference>
<dbReference type="GO" id="GO:0046961">
    <property type="term" value="F:proton-transporting ATPase activity, rotational mechanism"/>
    <property type="evidence" value="ECO:0007669"/>
    <property type="project" value="InterPro"/>
</dbReference>
<dbReference type="GO" id="GO:0042777">
    <property type="term" value="P:proton motive force-driven plasma membrane ATP synthesis"/>
    <property type="evidence" value="ECO:0007669"/>
    <property type="project" value="UniProtKB-UniRule"/>
</dbReference>
<dbReference type="Gene3D" id="3.30.2320.30">
    <property type="entry name" value="ATP synthase, E subunit, C-terminal"/>
    <property type="match status" value="1"/>
</dbReference>
<dbReference type="Gene3D" id="1.20.5.620">
    <property type="entry name" value="F1F0 ATP synthase subunit B, membrane domain"/>
    <property type="match status" value="1"/>
</dbReference>
<dbReference type="HAMAP" id="MF_00311">
    <property type="entry name" value="ATP_synth_E_arch"/>
    <property type="match status" value="1"/>
</dbReference>
<dbReference type="InterPro" id="IPR028987">
    <property type="entry name" value="ATP_synth_B-like_membr_sf"/>
</dbReference>
<dbReference type="InterPro" id="IPR038495">
    <property type="entry name" value="ATPase_E_C"/>
</dbReference>
<dbReference type="InterPro" id="IPR002842">
    <property type="entry name" value="ATPase_V1_Esu"/>
</dbReference>
<dbReference type="Pfam" id="PF01991">
    <property type="entry name" value="vATP-synt_E"/>
    <property type="match status" value="1"/>
</dbReference>
<dbReference type="SUPFAM" id="SSF81573">
    <property type="entry name" value="F1F0 ATP synthase subunit B, membrane domain"/>
    <property type="match status" value="1"/>
</dbReference>
<dbReference type="SUPFAM" id="SSF160527">
    <property type="entry name" value="V-type ATPase subunit E-like"/>
    <property type="match status" value="1"/>
</dbReference>
<feature type="chain" id="PRO_1000115676" description="V-type proton ATPase subunit E">
    <location>
        <begin position="1"/>
        <end position="199"/>
    </location>
</feature>
<name>VATE_CLOBM</name>
<keyword id="KW-0066">ATP synthesis</keyword>
<keyword id="KW-0375">Hydrogen ion transport</keyword>
<keyword id="KW-0406">Ion transport</keyword>
<keyword id="KW-0813">Transport</keyword>
<accession>B1KXT9</accession>
<comment type="function">
    <text evidence="1">Produces ATP from ADP in the presence of a proton gradient across the membrane.</text>
</comment>
<comment type="similarity">
    <text evidence="1">Belongs to the V-ATPase E subunit family.</text>
</comment>
<reference key="1">
    <citation type="journal article" date="2007" name="PLoS ONE">
        <title>Analysis of the neurotoxin complex genes in Clostridium botulinum A1-A4 and B1 strains: BoNT/A3, /Ba4 and /B1 clusters are located within plasmids.</title>
        <authorList>
            <person name="Smith T.J."/>
            <person name="Hill K.K."/>
            <person name="Foley B.T."/>
            <person name="Detter J.C."/>
            <person name="Munk A.C."/>
            <person name="Bruce D.C."/>
            <person name="Doggett N.A."/>
            <person name="Smith L.A."/>
            <person name="Marks J.D."/>
            <person name="Xie G."/>
            <person name="Brettin T.S."/>
        </authorList>
    </citation>
    <scope>NUCLEOTIDE SEQUENCE [LARGE SCALE GENOMIC DNA]</scope>
    <source>
        <strain>Loch Maree / Type A3</strain>
    </source>
</reference>
<proteinExistence type="inferred from homology"/>